<keyword id="KW-0963">Cytoplasm</keyword>
<keyword id="KW-1185">Reference proteome</keyword>
<keyword id="KW-0677">Repeat</keyword>
<keyword id="KW-0853">WD repeat</keyword>
<name>EIPR1_CAEEL</name>
<organism evidence="5">
    <name type="scientific">Caenorhabditis elegans</name>
    <dbReference type="NCBI Taxonomy" id="6239"/>
    <lineage>
        <taxon>Eukaryota</taxon>
        <taxon>Metazoa</taxon>
        <taxon>Ecdysozoa</taxon>
        <taxon>Nematoda</taxon>
        <taxon>Chromadorea</taxon>
        <taxon>Rhabditida</taxon>
        <taxon>Rhabditina</taxon>
        <taxon>Rhabditomorpha</taxon>
        <taxon>Rhabditoidea</taxon>
        <taxon>Rhabditidae</taxon>
        <taxon>Peloderinae</taxon>
        <taxon>Caenorhabditis</taxon>
    </lineage>
</organism>
<feature type="chain" id="PRO_0000437441" description="EARP-interacting protein 1">
    <location>
        <begin position="1"/>
        <end position="362"/>
    </location>
</feature>
<feature type="repeat" description="WD 1" evidence="1">
    <location>
        <begin position="61"/>
        <end position="108"/>
    </location>
</feature>
<feature type="repeat" description="WD 2" evidence="1">
    <location>
        <begin position="206"/>
        <end position="246"/>
    </location>
</feature>
<feature type="repeat" description="WD 3" evidence="1">
    <location>
        <begin position="250"/>
        <end position="290"/>
    </location>
</feature>
<feature type="repeat" description="WD 4" evidence="1">
    <location>
        <begin position="319"/>
        <end position="359"/>
    </location>
</feature>
<sequence length="362" mass="40954">MSECLMFGMDCEARCMTSMTADEENICFLVGTNNIKNDKNQVNKLFMDPEASRLMSKTFRHPAGEVRAIAAHPTKSTILATCTADFSSLGGTHSITIWNIEEDKRTLETVSRLPTEQVMSCLEWEPNSMKCAAMTPFRPEIQLLNMENGPEIVQNLKIPLENEEDEMFSATWSPHHDGNMLGVTGGRTAWCIDCRTDNEYLKIRDAHIHRTISMDFNPNLQHVIATCGDDGYVRIWDTRSTSSALTSLHPHAHWVWSVRFHPVHDQLLLTGGSDASVVLSCAQSVSSEQQIEFRDDEEEEEDDDLVEKLQDGQLERIDEHEDSVYACAWSSADPWTFASLSYDGRMIVSNVSRKHKYALMQL</sequence>
<comment type="function">
    <text evidence="2">Plays a role in the trafficking of cargo to dense-core vesicles, probably through association with the endosome-associated recycling protein (EARP) complex. Important for neuronal function.</text>
</comment>
<comment type="subcellular location">
    <subcellularLocation>
        <location evidence="2">Cytoplasm</location>
    </subcellularLocation>
    <text>The cytoplasmic localization is supported by the over-expression of an eipr-1-GFP fusion protein.</text>
</comment>
<comment type="tissue specificity">
    <text evidence="2">Expressed in the hypodermis and the pharynx.</text>
</comment>
<comment type="disruption phenotype">
    <text evidence="2">Defective egg-laying and slow, but coordinated locomotion when stimulated. Reduced levels of both unprocessed and processed luminal and transmembrane cargo in the motor neuron axons of the dorsal nerve cord. Double knockout with either rab-2, rund-1 or vps-50 results in reduced levels of both unprocessed and processed luminal and transmembrane cargo in the motor neuron axons of the dorsal nerve cord.</text>
</comment>
<comment type="similarity">
    <text evidence="4">Belongs to the WD repeat EIPR1 family.</text>
</comment>
<comment type="caution">
    <text evidence="3">The subcellular location of endogenous eipr-1 could not be identified; diffuse expression of a eipr-1 construct in the cytoplasm may be an artifact due to over-expression of the construct.</text>
</comment>
<protein>
    <recommendedName>
        <fullName evidence="3">EARP-interacting protein 1</fullName>
    </recommendedName>
    <alternativeName>
        <fullName evidence="3">Endosome-associated recycling protein-interacting protein</fullName>
    </alternativeName>
</protein>
<proteinExistence type="evidence at transcript level"/>
<reference evidence="5" key="1">
    <citation type="journal article" date="1998" name="Science">
        <title>Genome sequence of the nematode C. elegans: a platform for investigating biology.</title>
        <authorList>
            <consortium name="The C. elegans sequencing consortium"/>
        </authorList>
    </citation>
    <scope>NUCLEOTIDE SEQUENCE [LARGE SCALE GENOMIC DNA]</scope>
    <source>
        <strain evidence="5">Bristol N2</strain>
    </source>
</reference>
<reference evidence="4" key="2">
    <citation type="journal article" date="2016" name="PLoS Genet.">
        <title>The EARP complex and its interactor eipr-1 are required for cargo sorting to dense-core vesicles.</title>
        <authorList>
            <person name="Topalidou I."/>
            <person name="Cattin-Ortola J."/>
            <person name="Pappas A.L."/>
            <person name="Cooper K."/>
            <person name="Merrihew G.E."/>
            <person name="MacCoss M.J."/>
            <person name="Ailion M."/>
        </authorList>
    </citation>
    <scope>FUNCTION</scope>
    <scope>TISSUE SPECIFICITY</scope>
    <scope>DISRUPTION PHENOTYPE</scope>
</reference>
<gene>
    <name evidence="6" type="primary">eipr-1</name>
    <name evidence="6" type="ORF">Y87G2A.11</name>
</gene>
<dbReference type="EMBL" id="BX284601">
    <property type="protein sequence ID" value="CAB60432.1"/>
    <property type="molecule type" value="Genomic_DNA"/>
</dbReference>
<dbReference type="RefSeq" id="NP_493383.1">
    <property type="nucleotide sequence ID" value="NM_060982.6"/>
</dbReference>
<dbReference type="SMR" id="Q9U1Q0"/>
<dbReference type="FunCoup" id="Q9U1Q0">
    <property type="interactions" value="2392"/>
</dbReference>
<dbReference type="STRING" id="6239.Y87G2A.11.1"/>
<dbReference type="PaxDb" id="6239-Y87G2A.11"/>
<dbReference type="PeptideAtlas" id="Q9U1Q0"/>
<dbReference type="EnsemblMetazoa" id="Y87G2A.11.1">
    <property type="protein sequence ID" value="Y87G2A.11.1"/>
    <property type="gene ID" value="WBGene00013599"/>
</dbReference>
<dbReference type="GeneID" id="190778"/>
<dbReference type="KEGG" id="cel:CELE_Y87G2A.11"/>
<dbReference type="UCSC" id="Y87G2A.11">
    <property type="organism name" value="c. elegans"/>
</dbReference>
<dbReference type="AGR" id="WB:WBGene00013599"/>
<dbReference type="CTD" id="190778"/>
<dbReference type="WormBase" id="Y87G2A.11">
    <property type="protein sequence ID" value="CE24682"/>
    <property type="gene ID" value="WBGene00013599"/>
    <property type="gene designation" value="eipr-1"/>
</dbReference>
<dbReference type="eggNOG" id="KOG1007">
    <property type="taxonomic scope" value="Eukaryota"/>
</dbReference>
<dbReference type="GeneTree" id="ENSGT00730000111137"/>
<dbReference type="HOGENOM" id="CLU_050772_0_0_1"/>
<dbReference type="InParanoid" id="Q9U1Q0"/>
<dbReference type="OMA" id="HKYAILR"/>
<dbReference type="OrthoDB" id="196957at2759"/>
<dbReference type="PhylomeDB" id="Q9U1Q0"/>
<dbReference type="PRO" id="PR:Q9U1Q0"/>
<dbReference type="Proteomes" id="UP000001940">
    <property type="component" value="Chromosome I"/>
</dbReference>
<dbReference type="Bgee" id="WBGene00013599">
    <property type="expression patterns" value="Expressed in germ line (C elegans) and 4 other cell types or tissues"/>
</dbReference>
<dbReference type="GO" id="GO:0005737">
    <property type="term" value="C:cytoplasm"/>
    <property type="evidence" value="ECO:0007669"/>
    <property type="project" value="UniProtKB-SubCell"/>
</dbReference>
<dbReference type="GO" id="GO:1904811">
    <property type="term" value="P:positive regulation of dense core granule transport"/>
    <property type="evidence" value="ECO:0000315"/>
    <property type="project" value="UniProtKB"/>
</dbReference>
<dbReference type="GO" id="GO:1901046">
    <property type="term" value="P:positive regulation of egg-laying behavior"/>
    <property type="evidence" value="ECO:0000315"/>
    <property type="project" value="UniProtKB"/>
</dbReference>
<dbReference type="GO" id="GO:0090326">
    <property type="term" value="P:positive regulation of locomotion involved in locomotory behavior"/>
    <property type="evidence" value="ECO:0000315"/>
    <property type="project" value="UniProtKB"/>
</dbReference>
<dbReference type="GO" id="GO:0016567">
    <property type="term" value="P:protein ubiquitination"/>
    <property type="evidence" value="ECO:0000318"/>
    <property type="project" value="GO_Central"/>
</dbReference>
<dbReference type="FunFam" id="2.130.10.10:FF:000732">
    <property type="entry name" value="EARP-interacting protein homolog"/>
    <property type="match status" value="1"/>
</dbReference>
<dbReference type="Gene3D" id="2.130.10.10">
    <property type="entry name" value="YVTN repeat-like/Quinoprotein amine dehydrogenase"/>
    <property type="match status" value="1"/>
</dbReference>
<dbReference type="InterPro" id="IPR040323">
    <property type="entry name" value="EIPR1"/>
</dbReference>
<dbReference type="InterPro" id="IPR015943">
    <property type="entry name" value="WD40/YVTN_repeat-like_dom_sf"/>
</dbReference>
<dbReference type="InterPro" id="IPR019775">
    <property type="entry name" value="WD40_repeat_CS"/>
</dbReference>
<dbReference type="InterPro" id="IPR036322">
    <property type="entry name" value="WD40_repeat_dom_sf"/>
</dbReference>
<dbReference type="InterPro" id="IPR001680">
    <property type="entry name" value="WD40_rpt"/>
</dbReference>
<dbReference type="PANTHER" id="PTHR14205:SF15">
    <property type="entry name" value="EARP AND GARP COMPLEX-INTERACTING PROTEIN 1"/>
    <property type="match status" value="1"/>
</dbReference>
<dbReference type="PANTHER" id="PTHR14205">
    <property type="entry name" value="WD-REPEAT PROTEIN"/>
    <property type="match status" value="1"/>
</dbReference>
<dbReference type="Pfam" id="PF23609">
    <property type="entry name" value="Beta-prop_EIPR1"/>
    <property type="match status" value="1"/>
</dbReference>
<dbReference type="Pfam" id="PF00400">
    <property type="entry name" value="WD40"/>
    <property type="match status" value="1"/>
</dbReference>
<dbReference type="SMART" id="SM00320">
    <property type="entry name" value="WD40"/>
    <property type="match status" value="4"/>
</dbReference>
<dbReference type="SUPFAM" id="SSF50978">
    <property type="entry name" value="WD40 repeat-like"/>
    <property type="match status" value="1"/>
</dbReference>
<dbReference type="PROSITE" id="PS00678">
    <property type="entry name" value="WD_REPEATS_1"/>
    <property type="match status" value="1"/>
</dbReference>
<dbReference type="PROSITE" id="PS50082">
    <property type="entry name" value="WD_REPEATS_2"/>
    <property type="match status" value="1"/>
</dbReference>
<dbReference type="PROSITE" id="PS50294">
    <property type="entry name" value="WD_REPEATS_REGION"/>
    <property type="match status" value="1"/>
</dbReference>
<accession>Q9U1Q0</accession>
<evidence type="ECO:0000255" key="1"/>
<evidence type="ECO:0000269" key="2">
    <source>
    </source>
</evidence>
<evidence type="ECO:0000303" key="3">
    <source>
    </source>
</evidence>
<evidence type="ECO:0000305" key="4"/>
<evidence type="ECO:0000312" key="5">
    <source>
        <dbReference type="Proteomes" id="UP000001940"/>
    </source>
</evidence>
<evidence type="ECO:0000312" key="6">
    <source>
        <dbReference type="WormBase" id="Y87G2A.11"/>
    </source>
</evidence>